<gene>
    <name evidence="1" type="primary">pepA</name>
    <name type="ordered locus">Cpha266_1537</name>
</gene>
<dbReference type="EC" id="3.4.11.1" evidence="1"/>
<dbReference type="EC" id="3.4.11.10" evidence="1"/>
<dbReference type="EMBL" id="CP000492">
    <property type="protein sequence ID" value="ABL65559.1"/>
    <property type="molecule type" value="Genomic_DNA"/>
</dbReference>
<dbReference type="RefSeq" id="WP_011745371.1">
    <property type="nucleotide sequence ID" value="NC_008639.1"/>
</dbReference>
<dbReference type="SMR" id="A1BGN2"/>
<dbReference type="STRING" id="290317.Cpha266_1537"/>
<dbReference type="KEGG" id="cph:Cpha266_1537"/>
<dbReference type="eggNOG" id="COG0260">
    <property type="taxonomic scope" value="Bacteria"/>
</dbReference>
<dbReference type="HOGENOM" id="CLU_013734_2_2_10"/>
<dbReference type="OrthoDB" id="9809354at2"/>
<dbReference type="Proteomes" id="UP000008701">
    <property type="component" value="Chromosome"/>
</dbReference>
<dbReference type="GO" id="GO:0005737">
    <property type="term" value="C:cytoplasm"/>
    <property type="evidence" value="ECO:0007669"/>
    <property type="project" value="UniProtKB-SubCell"/>
</dbReference>
<dbReference type="GO" id="GO:0030145">
    <property type="term" value="F:manganese ion binding"/>
    <property type="evidence" value="ECO:0007669"/>
    <property type="project" value="UniProtKB-UniRule"/>
</dbReference>
<dbReference type="GO" id="GO:0070006">
    <property type="term" value="F:metalloaminopeptidase activity"/>
    <property type="evidence" value="ECO:0007669"/>
    <property type="project" value="InterPro"/>
</dbReference>
<dbReference type="GO" id="GO:0006508">
    <property type="term" value="P:proteolysis"/>
    <property type="evidence" value="ECO:0007669"/>
    <property type="project" value="UniProtKB-KW"/>
</dbReference>
<dbReference type="CDD" id="cd00433">
    <property type="entry name" value="Peptidase_M17"/>
    <property type="match status" value="1"/>
</dbReference>
<dbReference type="Gene3D" id="3.40.220.10">
    <property type="entry name" value="Leucine Aminopeptidase, subunit E, domain 1"/>
    <property type="match status" value="1"/>
</dbReference>
<dbReference type="Gene3D" id="3.40.630.10">
    <property type="entry name" value="Zn peptidases"/>
    <property type="match status" value="1"/>
</dbReference>
<dbReference type="HAMAP" id="MF_00181">
    <property type="entry name" value="Cytosol_peptidase_M17"/>
    <property type="match status" value="1"/>
</dbReference>
<dbReference type="InterPro" id="IPR011356">
    <property type="entry name" value="Leucine_aapep/pepB"/>
</dbReference>
<dbReference type="InterPro" id="IPR043472">
    <property type="entry name" value="Macro_dom-like"/>
</dbReference>
<dbReference type="InterPro" id="IPR000819">
    <property type="entry name" value="Peptidase_M17_C"/>
</dbReference>
<dbReference type="InterPro" id="IPR023042">
    <property type="entry name" value="Peptidase_M17_leu_NH2_pept"/>
</dbReference>
<dbReference type="InterPro" id="IPR008283">
    <property type="entry name" value="Peptidase_M17_N"/>
</dbReference>
<dbReference type="NCBIfam" id="NF002073">
    <property type="entry name" value="PRK00913.1-2"/>
    <property type="match status" value="1"/>
</dbReference>
<dbReference type="NCBIfam" id="NF002074">
    <property type="entry name" value="PRK00913.1-4"/>
    <property type="match status" value="1"/>
</dbReference>
<dbReference type="NCBIfam" id="NF002082">
    <property type="entry name" value="PRK00913.3-4"/>
    <property type="match status" value="1"/>
</dbReference>
<dbReference type="PANTHER" id="PTHR11963:SF23">
    <property type="entry name" value="CYTOSOL AMINOPEPTIDASE"/>
    <property type="match status" value="1"/>
</dbReference>
<dbReference type="PANTHER" id="PTHR11963">
    <property type="entry name" value="LEUCINE AMINOPEPTIDASE-RELATED"/>
    <property type="match status" value="1"/>
</dbReference>
<dbReference type="Pfam" id="PF00883">
    <property type="entry name" value="Peptidase_M17"/>
    <property type="match status" value="1"/>
</dbReference>
<dbReference type="Pfam" id="PF02789">
    <property type="entry name" value="Peptidase_M17_N"/>
    <property type="match status" value="1"/>
</dbReference>
<dbReference type="PRINTS" id="PR00481">
    <property type="entry name" value="LAMNOPPTDASE"/>
</dbReference>
<dbReference type="SUPFAM" id="SSF52949">
    <property type="entry name" value="Macro domain-like"/>
    <property type="match status" value="1"/>
</dbReference>
<dbReference type="SUPFAM" id="SSF53187">
    <property type="entry name" value="Zn-dependent exopeptidases"/>
    <property type="match status" value="1"/>
</dbReference>
<dbReference type="PROSITE" id="PS00631">
    <property type="entry name" value="CYTOSOL_AP"/>
    <property type="match status" value="1"/>
</dbReference>
<reference key="1">
    <citation type="submission" date="2006-12" db="EMBL/GenBank/DDBJ databases">
        <title>Complete sequence of Chlorobium phaeobacteroides DSM 266.</title>
        <authorList>
            <consortium name="US DOE Joint Genome Institute"/>
            <person name="Copeland A."/>
            <person name="Lucas S."/>
            <person name="Lapidus A."/>
            <person name="Barry K."/>
            <person name="Detter J.C."/>
            <person name="Glavina del Rio T."/>
            <person name="Hammon N."/>
            <person name="Israni S."/>
            <person name="Pitluck S."/>
            <person name="Goltsman E."/>
            <person name="Schmutz J."/>
            <person name="Larimer F."/>
            <person name="Land M."/>
            <person name="Hauser L."/>
            <person name="Mikhailova N."/>
            <person name="Li T."/>
            <person name="Overmann J."/>
            <person name="Bryant D.A."/>
            <person name="Richardson P."/>
        </authorList>
    </citation>
    <scope>NUCLEOTIDE SEQUENCE [LARGE SCALE GENOMIC DNA]</scope>
    <source>
        <strain>DSM 266 / SMG 266 / 2430</strain>
    </source>
</reference>
<proteinExistence type="inferred from homology"/>
<protein>
    <recommendedName>
        <fullName evidence="1">Probable cytosol aminopeptidase</fullName>
        <ecNumber evidence="1">3.4.11.1</ecNumber>
    </recommendedName>
    <alternativeName>
        <fullName evidence="1">Leucine aminopeptidase</fullName>
        <shortName evidence="1">LAP</shortName>
        <ecNumber evidence="1">3.4.11.10</ecNumber>
    </alternativeName>
    <alternativeName>
        <fullName evidence="1">Leucyl aminopeptidase</fullName>
    </alternativeName>
</protein>
<keyword id="KW-0031">Aminopeptidase</keyword>
<keyword id="KW-0963">Cytoplasm</keyword>
<keyword id="KW-0378">Hydrolase</keyword>
<keyword id="KW-0464">Manganese</keyword>
<keyword id="KW-0479">Metal-binding</keyword>
<keyword id="KW-0645">Protease</keyword>
<keyword id="KW-1185">Reference proteome</keyword>
<comment type="function">
    <text evidence="1">Presumably involved in the processing and regular turnover of intracellular proteins. Catalyzes the removal of unsubstituted N-terminal amino acids from various peptides.</text>
</comment>
<comment type="catalytic activity">
    <reaction evidence="1">
        <text>Release of an N-terminal amino acid, Xaa-|-Yaa-, in which Xaa is preferably Leu, but may be other amino acids including Pro although not Arg or Lys, and Yaa may be Pro. Amino acid amides and methyl esters are also readily hydrolyzed, but rates on arylamides are exceedingly low.</text>
        <dbReference type="EC" id="3.4.11.1"/>
    </reaction>
</comment>
<comment type="catalytic activity">
    <reaction evidence="1">
        <text>Release of an N-terminal amino acid, preferentially leucine, but not glutamic or aspartic acids.</text>
        <dbReference type="EC" id="3.4.11.10"/>
    </reaction>
</comment>
<comment type="cofactor">
    <cofactor evidence="1">
        <name>Mn(2+)</name>
        <dbReference type="ChEBI" id="CHEBI:29035"/>
    </cofactor>
    <text evidence="1">Binds 2 manganese ions per subunit.</text>
</comment>
<comment type="subcellular location">
    <subcellularLocation>
        <location evidence="1">Cytoplasm</location>
    </subcellularLocation>
</comment>
<comment type="similarity">
    <text evidence="1">Belongs to the peptidase M17 family.</text>
</comment>
<accession>A1BGN2</accession>
<organism>
    <name type="scientific">Chlorobium phaeobacteroides (strain DSM 266 / SMG 266 / 2430)</name>
    <dbReference type="NCBI Taxonomy" id="290317"/>
    <lineage>
        <taxon>Bacteria</taxon>
        <taxon>Pseudomonadati</taxon>
        <taxon>Chlorobiota</taxon>
        <taxon>Chlorobiia</taxon>
        <taxon>Chlorobiales</taxon>
        <taxon>Chlorobiaceae</taxon>
        <taxon>Chlorobium/Pelodictyon group</taxon>
        <taxon>Chlorobium</taxon>
    </lineage>
</organism>
<evidence type="ECO:0000255" key="1">
    <source>
        <dbReference type="HAMAP-Rule" id="MF_00181"/>
    </source>
</evidence>
<name>AMPA_CHLPD</name>
<sequence>MKIVVTKSAVKKLEADILAFPFCSGELKKQDAGVLSDFDISAHALKDFKAESGEIVLFYSSSEGHLIARVALLGLGDGKDPDDFRKAAASLAAKAMTMNLQRIAVDCSRFGTIAEDSKKRVGKLAETFVEGCFSGSYKFDRLKSGKLDKKKDDKKVKGISELILRFDASVFADAEEGAAQGEIVGSCQLMARDLVNLPGNYLQAEDIAKAAQDSGSRNGFAVKVLRKKEMEDLAMGGLLAVNQGSTHPPTFSILDYKPEGKAKAVVALVGKGVTFDSGGISLKPSEGMGEMKSDMSGAACVIAAVEAAARLGLSLRVIGLIPATDNMPDGSAQKPGDVITTYSGITVEVGNTDAEGRLILADALTYAKQEYNPDIIIDLATLTGACIVALGYSVAGLFSNNDKLAEEIYAAGISSGEKVWRMPLWDDYDELIKSEVADVNNTGGRGAGSVTAAKFLEKFIDGHKKWAHLDIAGPAFLSKSGGKVTGGTGFGVRLLIDLLKKWA</sequence>
<feature type="chain" id="PRO_1000019905" description="Probable cytosol aminopeptidase">
    <location>
        <begin position="1"/>
        <end position="503"/>
    </location>
</feature>
<feature type="active site" evidence="1">
    <location>
        <position position="283"/>
    </location>
</feature>
<feature type="active site" evidence="1">
    <location>
        <position position="357"/>
    </location>
</feature>
<feature type="binding site" evidence="1">
    <location>
        <position position="271"/>
    </location>
    <ligand>
        <name>Mn(2+)</name>
        <dbReference type="ChEBI" id="CHEBI:29035"/>
        <label>2</label>
    </ligand>
</feature>
<feature type="binding site" evidence="1">
    <location>
        <position position="276"/>
    </location>
    <ligand>
        <name>Mn(2+)</name>
        <dbReference type="ChEBI" id="CHEBI:29035"/>
        <label>1</label>
    </ligand>
</feature>
<feature type="binding site" evidence="1">
    <location>
        <position position="276"/>
    </location>
    <ligand>
        <name>Mn(2+)</name>
        <dbReference type="ChEBI" id="CHEBI:29035"/>
        <label>2</label>
    </ligand>
</feature>
<feature type="binding site" evidence="1">
    <location>
        <position position="294"/>
    </location>
    <ligand>
        <name>Mn(2+)</name>
        <dbReference type="ChEBI" id="CHEBI:29035"/>
        <label>2</label>
    </ligand>
</feature>
<feature type="binding site" evidence="1">
    <location>
        <position position="353"/>
    </location>
    <ligand>
        <name>Mn(2+)</name>
        <dbReference type="ChEBI" id="CHEBI:29035"/>
        <label>1</label>
    </ligand>
</feature>
<feature type="binding site" evidence="1">
    <location>
        <position position="355"/>
    </location>
    <ligand>
        <name>Mn(2+)</name>
        <dbReference type="ChEBI" id="CHEBI:29035"/>
        <label>1</label>
    </ligand>
</feature>
<feature type="binding site" evidence="1">
    <location>
        <position position="355"/>
    </location>
    <ligand>
        <name>Mn(2+)</name>
        <dbReference type="ChEBI" id="CHEBI:29035"/>
        <label>2</label>
    </ligand>
</feature>